<evidence type="ECO:0000255" key="1">
    <source>
        <dbReference type="HAMAP-Rule" id="MF_00235"/>
    </source>
</evidence>
<protein>
    <recommendedName>
        <fullName evidence="1">Adenylate kinase</fullName>
        <shortName evidence="1">AK</shortName>
        <ecNumber evidence="1">2.7.4.3</ecNumber>
    </recommendedName>
    <alternativeName>
        <fullName evidence="1">ATP-AMP transphosphorylase</fullName>
    </alternativeName>
    <alternativeName>
        <fullName evidence="1">ATP:AMP phosphotransferase</fullName>
    </alternativeName>
    <alternativeName>
        <fullName evidence="1">Adenylate monophosphate kinase</fullName>
    </alternativeName>
</protein>
<comment type="function">
    <text evidence="1">Catalyzes the reversible transfer of the terminal phosphate group between ATP and AMP. Plays an important role in cellular energy homeostasis and in adenine nucleotide metabolism.</text>
</comment>
<comment type="catalytic activity">
    <reaction evidence="1">
        <text>AMP + ATP = 2 ADP</text>
        <dbReference type="Rhea" id="RHEA:12973"/>
        <dbReference type="ChEBI" id="CHEBI:30616"/>
        <dbReference type="ChEBI" id="CHEBI:456215"/>
        <dbReference type="ChEBI" id="CHEBI:456216"/>
        <dbReference type="EC" id="2.7.4.3"/>
    </reaction>
</comment>
<comment type="pathway">
    <text evidence="1">Purine metabolism; AMP biosynthesis via salvage pathway; AMP from ADP: step 1/1.</text>
</comment>
<comment type="subunit">
    <text evidence="1">Monomer.</text>
</comment>
<comment type="subcellular location">
    <subcellularLocation>
        <location evidence="1">Cytoplasm</location>
    </subcellularLocation>
</comment>
<comment type="domain">
    <text evidence="1">Consists of three domains, a large central CORE domain and two small peripheral domains, NMPbind and LID, which undergo movements during catalysis. The LID domain closes over the site of phosphoryl transfer upon ATP binding. Assembling and dissambling the active center during each catalytic cycle provides an effective means to prevent ATP hydrolysis.</text>
</comment>
<comment type="similarity">
    <text evidence="1">Belongs to the adenylate kinase family.</text>
</comment>
<dbReference type="EC" id="2.7.4.3" evidence="1"/>
<dbReference type="EMBL" id="CP000308">
    <property type="protein sequence ID" value="ABG14573.1"/>
    <property type="molecule type" value="Genomic_DNA"/>
</dbReference>
<dbReference type="RefSeq" id="WP_002208600.1">
    <property type="nucleotide sequence ID" value="NZ_CP009906.1"/>
</dbReference>
<dbReference type="SMR" id="Q1C4P9"/>
<dbReference type="GeneID" id="57975593"/>
<dbReference type="KEGG" id="ypa:YPA_2611"/>
<dbReference type="UniPathway" id="UPA00588">
    <property type="reaction ID" value="UER00649"/>
</dbReference>
<dbReference type="Proteomes" id="UP000001971">
    <property type="component" value="Chromosome"/>
</dbReference>
<dbReference type="GO" id="GO:0005737">
    <property type="term" value="C:cytoplasm"/>
    <property type="evidence" value="ECO:0007669"/>
    <property type="project" value="UniProtKB-SubCell"/>
</dbReference>
<dbReference type="GO" id="GO:0004017">
    <property type="term" value="F:adenylate kinase activity"/>
    <property type="evidence" value="ECO:0007669"/>
    <property type="project" value="UniProtKB-UniRule"/>
</dbReference>
<dbReference type="GO" id="GO:0005524">
    <property type="term" value="F:ATP binding"/>
    <property type="evidence" value="ECO:0007669"/>
    <property type="project" value="UniProtKB-UniRule"/>
</dbReference>
<dbReference type="GO" id="GO:0044209">
    <property type="term" value="P:AMP salvage"/>
    <property type="evidence" value="ECO:0007669"/>
    <property type="project" value="UniProtKB-UniRule"/>
</dbReference>
<dbReference type="CDD" id="cd01428">
    <property type="entry name" value="ADK"/>
    <property type="match status" value="1"/>
</dbReference>
<dbReference type="FunFam" id="3.40.50.300:FF:000106">
    <property type="entry name" value="Adenylate kinase mitochondrial"/>
    <property type="match status" value="1"/>
</dbReference>
<dbReference type="Gene3D" id="3.40.50.300">
    <property type="entry name" value="P-loop containing nucleotide triphosphate hydrolases"/>
    <property type="match status" value="1"/>
</dbReference>
<dbReference type="HAMAP" id="MF_00235">
    <property type="entry name" value="Adenylate_kinase_Adk"/>
    <property type="match status" value="1"/>
</dbReference>
<dbReference type="InterPro" id="IPR006259">
    <property type="entry name" value="Adenyl_kin_sub"/>
</dbReference>
<dbReference type="InterPro" id="IPR000850">
    <property type="entry name" value="Adenylat/UMP-CMP_kin"/>
</dbReference>
<dbReference type="InterPro" id="IPR033690">
    <property type="entry name" value="Adenylat_kinase_CS"/>
</dbReference>
<dbReference type="InterPro" id="IPR007862">
    <property type="entry name" value="Adenylate_kinase_lid-dom"/>
</dbReference>
<dbReference type="InterPro" id="IPR027417">
    <property type="entry name" value="P-loop_NTPase"/>
</dbReference>
<dbReference type="NCBIfam" id="TIGR01351">
    <property type="entry name" value="adk"/>
    <property type="match status" value="1"/>
</dbReference>
<dbReference type="NCBIfam" id="NF001379">
    <property type="entry name" value="PRK00279.1-1"/>
    <property type="match status" value="1"/>
</dbReference>
<dbReference type="NCBIfam" id="NF001380">
    <property type="entry name" value="PRK00279.1-2"/>
    <property type="match status" value="1"/>
</dbReference>
<dbReference type="NCBIfam" id="NF001381">
    <property type="entry name" value="PRK00279.1-3"/>
    <property type="match status" value="1"/>
</dbReference>
<dbReference type="NCBIfam" id="NF011100">
    <property type="entry name" value="PRK14527.1"/>
    <property type="match status" value="1"/>
</dbReference>
<dbReference type="PANTHER" id="PTHR23359">
    <property type="entry name" value="NUCLEOTIDE KINASE"/>
    <property type="match status" value="1"/>
</dbReference>
<dbReference type="Pfam" id="PF00406">
    <property type="entry name" value="ADK"/>
    <property type="match status" value="1"/>
</dbReference>
<dbReference type="Pfam" id="PF05191">
    <property type="entry name" value="ADK_lid"/>
    <property type="match status" value="1"/>
</dbReference>
<dbReference type="PRINTS" id="PR00094">
    <property type="entry name" value="ADENYLTKNASE"/>
</dbReference>
<dbReference type="SUPFAM" id="SSF52540">
    <property type="entry name" value="P-loop containing nucleoside triphosphate hydrolases"/>
    <property type="match status" value="1"/>
</dbReference>
<dbReference type="PROSITE" id="PS00113">
    <property type="entry name" value="ADENYLATE_KINASE"/>
    <property type="match status" value="1"/>
</dbReference>
<gene>
    <name evidence="1" type="primary">adk</name>
    <name type="ordered locus">YPA_2611</name>
</gene>
<reference key="1">
    <citation type="journal article" date="2006" name="J. Bacteriol.">
        <title>Complete genome sequence of Yersinia pestis strains Antiqua and Nepal516: evidence of gene reduction in an emerging pathogen.</title>
        <authorList>
            <person name="Chain P.S.G."/>
            <person name="Hu P."/>
            <person name="Malfatti S.A."/>
            <person name="Radnedge L."/>
            <person name="Larimer F."/>
            <person name="Vergez L.M."/>
            <person name="Worsham P."/>
            <person name="Chu M.C."/>
            <person name="Andersen G.L."/>
        </authorList>
    </citation>
    <scope>NUCLEOTIDE SEQUENCE [LARGE SCALE GENOMIC DNA]</scope>
    <source>
        <strain>Antiqua</strain>
    </source>
</reference>
<name>KAD_YERPA</name>
<feature type="chain" id="PRO_1000058942" description="Adenylate kinase">
    <location>
        <begin position="1"/>
        <end position="214"/>
    </location>
</feature>
<feature type="region of interest" description="NMP" evidence="1">
    <location>
        <begin position="30"/>
        <end position="59"/>
    </location>
</feature>
<feature type="region of interest" description="LID">
    <location>
        <begin position="122"/>
        <end position="159"/>
    </location>
</feature>
<feature type="binding site" evidence="1">
    <location>
        <begin position="10"/>
        <end position="15"/>
    </location>
    <ligand>
        <name>ATP</name>
        <dbReference type="ChEBI" id="CHEBI:30616"/>
    </ligand>
</feature>
<feature type="binding site" evidence="1">
    <location>
        <position position="31"/>
    </location>
    <ligand>
        <name>AMP</name>
        <dbReference type="ChEBI" id="CHEBI:456215"/>
    </ligand>
</feature>
<feature type="binding site" evidence="1">
    <location>
        <position position="36"/>
    </location>
    <ligand>
        <name>AMP</name>
        <dbReference type="ChEBI" id="CHEBI:456215"/>
    </ligand>
</feature>
<feature type="binding site" evidence="1">
    <location>
        <begin position="57"/>
        <end position="59"/>
    </location>
    <ligand>
        <name>AMP</name>
        <dbReference type="ChEBI" id="CHEBI:456215"/>
    </ligand>
</feature>
<feature type="binding site" evidence="1">
    <location>
        <begin position="85"/>
        <end position="88"/>
    </location>
    <ligand>
        <name>AMP</name>
        <dbReference type="ChEBI" id="CHEBI:456215"/>
    </ligand>
</feature>
<feature type="binding site" evidence="1">
    <location>
        <position position="92"/>
    </location>
    <ligand>
        <name>AMP</name>
        <dbReference type="ChEBI" id="CHEBI:456215"/>
    </ligand>
</feature>
<feature type="binding site" evidence="1">
    <location>
        <position position="123"/>
    </location>
    <ligand>
        <name>ATP</name>
        <dbReference type="ChEBI" id="CHEBI:30616"/>
    </ligand>
</feature>
<feature type="binding site" evidence="1">
    <location>
        <begin position="132"/>
        <end position="133"/>
    </location>
    <ligand>
        <name>ATP</name>
        <dbReference type="ChEBI" id="CHEBI:30616"/>
    </ligand>
</feature>
<feature type="binding site" evidence="1">
    <location>
        <position position="156"/>
    </location>
    <ligand>
        <name>AMP</name>
        <dbReference type="ChEBI" id="CHEBI:456215"/>
    </ligand>
</feature>
<feature type="binding site" evidence="1">
    <location>
        <position position="167"/>
    </location>
    <ligand>
        <name>AMP</name>
        <dbReference type="ChEBI" id="CHEBI:456215"/>
    </ligand>
</feature>
<feature type="binding site" evidence="1">
    <location>
        <position position="200"/>
    </location>
    <ligand>
        <name>ATP</name>
        <dbReference type="ChEBI" id="CHEBI:30616"/>
    </ligand>
</feature>
<proteinExistence type="inferred from homology"/>
<accession>Q1C4P9</accession>
<keyword id="KW-0067">ATP-binding</keyword>
<keyword id="KW-0963">Cytoplasm</keyword>
<keyword id="KW-0418">Kinase</keyword>
<keyword id="KW-0545">Nucleotide biosynthesis</keyword>
<keyword id="KW-0547">Nucleotide-binding</keyword>
<keyword id="KW-0808">Transferase</keyword>
<sequence length="214" mass="23672">MRIILLGAPGAGKGTQAQFIMEKYGIPQISTGDMLRAAVKAGSELGLKAKEIMDAGKLVTDELVIALVKERITQEDCRDGFLLDGFPRTIPQADAMKEAGIKVDYVLEFDVPDELIVERIVGRRVHAASGRVYHVKFNPPKVEDKDDVTGEELTIRKDDQEATVRKRLIEYHQQTAPLVSYYHKEADAGNTQYFKLDGTRNVAEVSAELATILG</sequence>
<organism>
    <name type="scientific">Yersinia pestis bv. Antiqua (strain Antiqua)</name>
    <dbReference type="NCBI Taxonomy" id="360102"/>
    <lineage>
        <taxon>Bacteria</taxon>
        <taxon>Pseudomonadati</taxon>
        <taxon>Pseudomonadota</taxon>
        <taxon>Gammaproteobacteria</taxon>
        <taxon>Enterobacterales</taxon>
        <taxon>Yersiniaceae</taxon>
        <taxon>Yersinia</taxon>
    </lineage>
</organism>